<name>RL34_ICTPU</name>
<dbReference type="EMBL" id="AF401588">
    <property type="protein sequence ID" value="AAK95160.1"/>
    <property type="molecule type" value="mRNA"/>
</dbReference>
<dbReference type="RefSeq" id="NP_001187057.1">
    <property type="nucleotide sequence ID" value="NM_001200128.1"/>
</dbReference>
<dbReference type="SMR" id="Q90YT5"/>
<dbReference type="STRING" id="7998.ENSIPUP00000029125"/>
<dbReference type="GeneID" id="100304546"/>
<dbReference type="KEGG" id="ipu:100304546"/>
<dbReference type="CTD" id="6164"/>
<dbReference type="OrthoDB" id="277449at2759"/>
<dbReference type="Proteomes" id="UP000221080">
    <property type="component" value="Chromosome 7"/>
</dbReference>
<dbReference type="GO" id="GO:0005829">
    <property type="term" value="C:cytosol"/>
    <property type="evidence" value="ECO:0007669"/>
    <property type="project" value="UniProtKB-SubCell"/>
</dbReference>
<dbReference type="GO" id="GO:0005783">
    <property type="term" value="C:endoplasmic reticulum"/>
    <property type="evidence" value="ECO:0007669"/>
    <property type="project" value="UniProtKB-SubCell"/>
</dbReference>
<dbReference type="GO" id="GO:1990904">
    <property type="term" value="C:ribonucleoprotein complex"/>
    <property type="evidence" value="ECO:0007669"/>
    <property type="project" value="UniProtKB-KW"/>
</dbReference>
<dbReference type="GO" id="GO:0005840">
    <property type="term" value="C:ribosome"/>
    <property type="evidence" value="ECO:0007669"/>
    <property type="project" value="UniProtKB-KW"/>
</dbReference>
<dbReference type="GO" id="GO:0003735">
    <property type="term" value="F:structural constituent of ribosome"/>
    <property type="evidence" value="ECO:0007669"/>
    <property type="project" value="InterPro"/>
</dbReference>
<dbReference type="GO" id="GO:0006412">
    <property type="term" value="P:translation"/>
    <property type="evidence" value="ECO:0007669"/>
    <property type="project" value="InterPro"/>
</dbReference>
<dbReference type="Gene3D" id="6.20.340.10">
    <property type="match status" value="1"/>
</dbReference>
<dbReference type="Gene3D" id="6.20.370.70">
    <property type="match status" value="1"/>
</dbReference>
<dbReference type="InterPro" id="IPR008195">
    <property type="entry name" value="Ribosomal_eL34"/>
</dbReference>
<dbReference type="InterPro" id="IPR038562">
    <property type="entry name" value="Ribosomal_eL34_C_sf"/>
</dbReference>
<dbReference type="InterPro" id="IPR018065">
    <property type="entry name" value="Ribosomal_eL34_CS"/>
</dbReference>
<dbReference type="PANTHER" id="PTHR46595">
    <property type="entry name" value="60S RIBOSOMAL PROTEIN L34"/>
    <property type="match status" value="1"/>
</dbReference>
<dbReference type="Pfam" id="PF01199">
    <property type="entry name" value="Ribosomal_L34e"/>
    <property type="match status" value="1"/>
</dbReference>
<dbReference type="PRINTS" id="PR01250">
    <property type="entry name" value="RIBOSOMALL34"/>
</dbReference>
<dbReference type="PROSITE" id="PS01145">
    <property type="entry name" value="RIBOSOMAL_L34E"/>
    <property type="match status" value="1"/>
</dbReference>
<protein>
    <recommendedName>
        <fullName evidence="3">Large ribosomal subunit protein eL34</fullName>
    </recommendedName>
    <alternativeName>
        <fullName>60S ribosomal protein L34</fullName>
    </alternativeName>
</protein>
<sequence>MVQRLTYRRTVSYNTTSNKTRLSRTPGNRIVYLYTKKTGKAPKSACGICPGRLRGIRAVRPQVLMRLSKTKKHVSRAYGGSMCAKCVRDRIKRAFLIEEQKIVVKVLKAQAQSQKAK</sequence>
<keyword id="KW-0963">Cytoplasm</keyword>
<keyword id="KW-0256">Endoplasmic reticulum</keyword>
<keyword id="KW-0687">Ribonucleoprotein</keyword>
<keyword id="KW-0689">Ribosomal protein</keyword>
<evidence type="ECO:0000250" key="1">
    <source>
        <dbReference type="UniProtKB" id="P49207"/>
    </source>
</evidence>
<evidence type="ECO:0000250" key="2">
    <source>
        <dbReference type="UniProtKB" id="Q29223"/>
    </source>
</evidence>
<evidence type="ECO:0000305" key="3"/>
<proteinExistence type="inferred from homology"/>
<gene>
    <name type="primary">rpl34</name>
</gene>
<feature type="initiator methionine" description="Removed" evidence="1">
    <location>
        <position position="1"/>
    </location>
</feature>
<feature type="chain" id="PRO_0000131836" description="Large ribosomal subunit protein eL34">
    <location>
        <begin position="2"/>
        <end position="117"/>
    </location>
</feature>
<comment type="function">
    <text evidence="1">Component of the large ribosomal subunit. The ribosome is a large ribonucleoprotein complex responsible for the synthesis of proteins in the cell.</text>
</comment>
<comment type="subunit">
    <text evidence="1">Component of the large ribosomal subunit.</text>
</comment>
<comment type="subcellular location">
    <subcellularLocation>
        <location evidence="1">Cytoplasm</location>
        <location evidence="1">Cytosol</location>
    </subcellularLocation>
    <subcellularLocation>
        <location evidence="1">Cytoplasm</location>
    </subcellularLocation>
    <subcellularLocation>
        <location evidence="2">Endoplasmic reticulum</location>
    </subcellularLocation>
    <text evidence="1 2">Detected on cytosolic polysomes (By similarity). Detected in ribosomes that are associated with the rough endoplasmic reticulum (By similarity).</text>
</comment>
<comment type="similarity">
    <text evidence="3">Belongs to the eukaryotic ribosomal protein eL34 family.</text>
</comment>
<organism>
    <name type="scientific">Ictalurus punctatus</name>
    <name type="common">Channel catfish</name>
    <name type="synonym">Silurus punctatus</name>
    <dbReference type="NCBI Taxonomy" id="7998"/>
    <lineage>
        <taxon>Eukaryota</taxon>
        <taxon>Metazoa</taxon>
        <taxon>Chordata</taxon>
        <taxon>Craniata</taxon>
        <taxon>Vertebrata</taxon>
        <taxon>Euteleostomi</taxon>
        <taxon>Actinopterygii</taxon>
        <taxon>Neopterygii</taxon>
        <taxon>Teleostei</taxon>
        <taxon>Ostariophysi</taxon>
        <taxon>Siluriformes</taxon>
        <taxon>Ictaluridae</taxon>
        <taxon>Ictalurus</taxon>
    </lineage>
</organism>
<accession>Q90YT5</accession>
<reference key="1">
    <citation type="journal article" date="2003" name="Gene">
        <title>Translational machinery of channel catfish: II. Complementary DNA and expression of the complete set of 47 60S ribosomal proteins.</title>
        <authorList>
            <person name="Patterson A.P."/>
            <person name="Karsi A."/>
            <person name="Feng J."/>
            <person name="Liu Z.J."/>
        </authorList>
    </citation>
    <scope>NUCLEOTIDE SEQUENCE [MRNA]</scope>
</reference>